<accession>B4N7R4</accession>
<name>MOCS3_DROWI</name>
<gene>
    <name evidence="3" type="primary">Uba4</name>
    <name type="ORF">GK18675</name>
</gene>
<keyword id="KW-0067">ATP-binding</keyword>
<keyword id="KW-0963">Cytoplasm</keyword>
<keyword id="KW-0479">Metal-binding</keyword>
<keyword id="KW-0501">Molybdenum cofactor biosynthesis</keyword>
<keyword id="KW-0511">Multifunctional enzyme</keyword>
<keyword id="KW-0547">Nucleotide-binding</keyword>
<keyword id="KW-0548">Nucleotidyltransferase</keyword>
<keyword id="KW-0597">Phosphoprotein</keyword>
<keyword id="KW-1185">Reference proteome</keyword>
<keyword id="KW-0808">Transferase</keyword>
<keyword id="KW-0819">tRNA processing</keyword>
<keyword id="KW-0862">Zinc</keyword>
<organism>
    <name type="scientific">Drosophila willistoni</name>
    <name type="common">Fruit fly</name>
    <dbReference type="NCBI Taxonomy" id="7260"/>
    <lineage>
        <taxon>Eukaryota</taxon>
        <taxon>Metazoa</taxon>
        <taxon>Ecdysozoa</taxon>
        <taxon>Arthropoda</taxon>
        <taxon>Hexapoda</taxon>
        <taxon>Insecta</taxon>
        <taxon>Pterygota</taxon>
        <taxon>Neoptera</taxon>
        <taxon>Endopterygota</taxon>
        <taxon>Diptera</taxon>
        <taxon>Brachycera</taxon>
        <taxon>Muscomorpha</taxon>
        <taxon>Ephydroidea</taxon>
        <taxon>Drosophilidae</taxon>
        <taxon>Drosophila</taxon>
        <taxon>Sophophora</taxon>
    </lineage>
</organism>
<protein>
    <recommendedName>
        <fullName evidence="4">Adenylyltransferase and sulfurtransferase MOCS3</fullName>
    </recommendedName>
    <alternativeName>
        <fullName evidence="4">Molybdenum cofactor synthesis protein 3</fullName>
    </alternativeName>
    <alternativeName>
        <fullName evidence="3">Ubiquitin activating enzyme 4</fullName>
    </alternativeName>
    <domain>
        <recommendedName>
            <fullName evidence="4">Molybdopterin-synthase adenylyltransferase</fullName>
            <ecNumber evidence="4">2.7.7.80</ecNumber>
        </recommendedName>
        <alternativeName>
            <fullName evidence="4">Adenylyltransferase MOCS3</fullName>
        </alternativeName>
        <alternativeName>
            <fullName evidence="4">Sulfur carrier protein MOCS2A adenylyltransferase</fullName>
        </alternativeName>
    </domain>
    <domain>
        <recommendedName>
            <fullName evidence="4">Molybdopterin-synthase sulfurtransferase</fullName>
            <ecNumber evidence="4">2.8.1.11</ecNumber>
        </recommendedName>
        <alternativeName>
            <fullName evidence="4">Sulfur carrier protein MOCS2A sulfurtransferase</fullName>
        </alternativeName>
        <alternativeName>
            <fullName evidence="4">Sulfurtransferase MOCS3</fullName>
        </alternativeName>
    </domain>
</protein>
<reference key="1">
    <citation type="journal article" date="2007" name="Nature">
        <title>Evolution of genes and genomes on the Drosophila phylogeny.</title>
        <authorList>
            <consortium name="Drosophila 12 genomes consortium"/>
        </authorList>
    </citation>
    <scope>NUCLEOTIDE SEQUENCE [LARGE SCALE GENOMIC DNA]</scope>
    <source>
        <strain>Tucson 14030-0811.24</strain>
    </source>
</reference>
<sequence>MLGVEALRNERSRLRQEIADLRSAICKKEQSLRELEEALANGGGNGDGLADEGGERNTGTIQTQLTNDDIARYSRQLILPNFGVQGQLRLKNSSVLIVGMGGLGCPAAQYLAAAGVGYLGLIDYDQVERSNFHRQTLHTEARCGMAKTESARIALLELNPSCRIHCHSELINSHNASNIMRSYDVVLDCSDNVATRYLLNDACVIFRKPLVSGSALKMDGQLTVYNYGAQGPCYRCIYPVPPPPEAVTNCGDGGVLGAVTGVIGSLQALETIKIIVGGLGEVLAGRMLIFDGTTGQFRNIRIRSKRSNCHACSSQPLITDLIDYELFCGMHATDKDHPLQLLESDQRLDVQTYHDKLESQPHLLFDVRSTAEFEICQLSTNAINLPLAEVLDDSYLKRFAVELQNKDLPIIVLCRRGNDSQIAVQHMRNRFPDHSIRDLIGGLHAWTRKVDPDFPIY</sequence>
<comment type="function">
    <text evidence="4">Plays a central role in 2-thiolation of mcm(5)S(2)U at tRNA wobble positions of cytosolic tRNA(Lys), tRNA(Glu) and tRNA(Gln). Also essential during biosynthesis of the molybdenum cofactor. Acts by mediating the C-terminal thiocarboxylation of sulfur carriers URM1 and MOCS2A. Its N-terminus first activates URM1 and MOCS2A as acyl-adenylates (-COAMP), then the persulfide sulfur on the catalytic cysteine is transferred to URM1 and MOCS2A to form thiocarboxylation (-COSH) of their C-terminus. The reaction probably involves hydrogen sulfide that is generated from the persulfide intermediate and that acts as a nucleophile towards URM1 and MOCS2A. Subsequently, a transient disulfide bond is formed. Does not use thiosulfate as sulfur donor; NFS1 probably acting as a sulfur donor for thiocarboxylation reactions.</text>
</comment>
<comment type="catalytic activity">
    <reaction evidence="4">
        <text>[molybdopterin-synthase sulfur-carrier protein]-C-terminal Gly-Gly + ATP + H(+) = [molybdopterin-synthase sulfur-carrier protein]-C-terminal Gly-Gly-AMP + diphosphate</text>
        <dbReference type="Rhea" id="RHEA:43616"/>
        <dbReference type="Rhea" id="RHEA-COMP:12159"/>
        <dbReference type="Rhea" id="RHEA-COMP:12202"/>
        <dbReference type="ChEBI" id="CHEBI:15378"/>
        <dbReference type="ChEBI" id="CHEBI:30616"/>
        <dbReference type="ChEBI" id="CHEBI:33019"/>
        <dbReference type="ChEBI" id="CHEBI:90618"/>
        <dbReference type="ChEBI" id="CHEBI:90778"/>
        <dbReference type="EC" id="2.7.7.80"/>
    </reaction>
</comment>
<comment type="catalytic activity">
    <reaction evidence="4">
        <text>[molybdopterin-synthase sulfur-carrier protein]-C-terminal Gly-Gly-AMP + S-sulfanyl-L-cysteinyl-[cysteine desulfurase] + AH2 = [molybdopterin-synthase sulfur-carrier protein]-C-terminal-Gly-aminoethanethioate + L-cysteinyl-[cysteine desulfurase] + A + AMP + 2 H(+)</text>
        <dbReference type="Rhea" id="RHEA:48612"/>
        <dbReference type="Rhea" id="RHEA-COMP:12157"/>
        <dbReference type="Rhea" id="RHEA-COMP:12158"/>
        <dbReference type="Rhea" id="RHEA-COMP:12159"/>
        <dbReference type="Rhea" id="RHEA-COMP:19907"/>
        <dbReference type="ChEBI" id="CHEBI:13193"/>
        <dbReference type="ChEBI" id="CHEBI:15378"/>
        <dbReference type="ChEBI" id="CHEBI:17499"/>
        <dbReference type="ChEBI" id="CHEBI:29950"/>
        <dbReference type="ChEBI" id="CHEBI:61963"/>
        <dbReference type="ChEBI" id="CHEBI:90618"/>
        <dbReference type="ChEBI" id="CHEBI:232372"/>
        <dbReference type="ChEBI" id="CHEBI:456215"/>
        <dbReference type="EC" id="2.8.1.11"/>
    </reaction>
</comment>
<comment type="cofactor">
    <cofactor evidence="4">
        <name>Zn(2+)</name>
        <dbReference type="ChEBI" id="CHEBI:29105"/>
    </cofactor>
    <text evidence="4">Binds 1 zinc ion per subunit.</text>
</comment>
<comment type="pathway">
    <text evidence="4">tRNA modification; 5-methoxycarbonylmethyl-2-thiouridine-tRNA biosynthesis.</text>
</comment>
<comment type="pathway">
    <text evidence="4">Cofactor biosynthesis; molybdopterin biosynthesis.</text>
</comment>
<comment type="subcellular location">
    <subcellularLocation>
        <location evidence="2">Cytoplasm</location>
        <location evidence="2">Cytosol</location>
    </subcellularLocation>
</comment>
<comment type="similarity">
    <text evidence="4">In the N-terminal section; belongs to the HesA/MoeB/ThiF family. UBA4 subfamily.</text>
</comment>
<proteinExistence type="inferred from homology"/>
<evidence type="ECO:0000250" key="1"/>
<evidence type="ECO:0000250" key="2">
    <source>
        <dbReference type="UniProtKB" id="O95396"/>
    </source>
</evidence>
<evidence type="ECO:0000250" key="3">
    <source>
        <dbReference type="UniProtKB" id="Q9VLJ8"/>
    </source>
</evidence>
<evidence type="ECO:0000255" key="4">
    <source>
        <dbReference type="HAMAP-Rule" id="MF_03049"/>
    </source>
</evidence>
<evidence type="ECO:0000256" key="5">
    <source>
        <dbReference type="SAM" id="MobiDB-lite"/>
    </source>
</evidence>
<feature type="chain" id="PRO_0000369211" description="Adenylyltransferase and sulfurtransferase MOCS3">
    <location>
        <begin position="1"/>
        <end position="457"/>
    </location>
</feature>
<feature type="domain" description="Rhodanese" evidence="4">
    <location>
        <begin position="358"/>
        <end position="455"/>
    </location>
</feature>
<feature type="region of interest" description="Disordered" evidence="5">
    <location>
        <begin position="40"/>
        <end position="60"/>
    </location>
</feature>
<feature type="active site" description="Glycyl thioester intermediate; for adenylyltransferase activity" evidence="4">
    <location>
        <position position="250"/>
    </location>
</feature>
<feature type="active site" description="Cysteine persulfide intermediate; for sulfurtransferase activity" evidence="4">
    <location>
        <position position="414"/>
    </location>
</feature>
<feature type="binding site" evidence="4">
    <location>
        <position position="102"/>
    </location>
    <ligand>
        <name>ATP</name>
        <dbReference type="ChEBI" id="CHEBI:30616"/>
    </ligand>
</feature>
<feature type="binding site" evidence="4">
    <location>
        <position position="123"/>
    </location>
    <ligand>
        <name>ATP</name>
        <dbReference type="ChEBI" id="CHEBI:30616"/>
    </ligand>
</feature>
<feature type="binding site" evidence="4">
    <location>
        <begin position="130"/>
        <end position="134"/>
    </location>
    <ligand>
        <name>ATP</name>
        <dbReference type="ChEBI" id="CHEBI:30616"/>
    </ligand>
</feature>
<feature type="binding site" evidence="4">
    <location>
        <position position="147"/>
    </location>
    <ligand>
        <name>ATP</name>
        <dbReference type="ChEBI" id="CHEBI:30616"/>
    </ligand>
</feature>
<feature type="binding site" evidence="4">
    <location>
        <begin position="191"/>
        <end position="192"/>
    </location>
    <ligand>
        <name>ATP</name>
        <dbReference type="ChEBI" id="CHEBI:30616"/>
    </ligand>
</feature>
<feature type="binding site" evidence="4">
    <location>
        <position position="233"/>
    </location>
    <ligand>
        <name>Zn(2+)</name>
        <dbReference type="ChEBI" id="CHEBI:29105"/>
    </ligand>
</feature>
<feature type="binding site" evidence="4">
    <location>
        <position position="236"/>
    </location>
    <ligand>
        <name>Zn(2+)</name>
        <dbReference type="ChEBI" id="CHEBI:29105"/>
    </ligand>
</feature>
<feature type="binding site" evidence="4">
    <location>
        <position position="309"/>
    </location>
    <ligand>
        <name>Zn(2+)</name>
        <dbReference type="ChEBI" id="CHEBI:29105"/>
    </ligand>
</feature>
<feature type="binding site" evidence="4">
    <location>
        <position position="312"/>
    </location>
    <ligand>
        <name>Zn(2+)</name>
        <dbReference type="ChEBI" id="CHEBI:29105"/>
    </ligand>
</feature>
<feature type="modified residue" description="Phosphothreonine" evidence="1">
    <location>
        <position position="63"/>
    </location>
</feature>
<dbReference type="EC" id="2.7.7.80" evidence="4"/>
<dbReference type="EC" id="2.8.1.11" evidence="4"/>
<dbReference type="EMBL" id="CH964214">
    <property type="protein sequence ID" value="EDW80403.1"/>
    <property type="molecule type" value="Genomic_DNA"/>
</dbReference>
<dbReference type="SMR" id="B4N7R4"/>
<dbReference type="STRING" id="7260.B4N7R4"/>
<dbReference type="EnsemblMetazoa" id="FBtr0249326">
    <property type="protein sequence ID" value="FBpp0247818"/>
    <property type="gene ID" value="FBgn0220673"/>
</dbReference>
<dbReference type="EnsemblMetazoa" id="XM_002069381.3">
    <property type="protein sequence ID" value="XP_002069417.1"/>
    <property type="gene ID" value="LOC6646750"/>
</dbReference>
<dbReference type="GeneID" id="6646750"/>
<dbReference type="KEGG" id="dwi:6646750"/>
<dbReference type="CTD" id="34187"/>
<dbReference type="eggNOG" id="KOG2017">
    <property type="taxonomic scope" value="Eukaryota"/>
</dbReference>
<dbReference type="HOGENOM" id="CLU_013325_1_2_1"/>
<dbReference type="OMA" id="IPDVGMD"/>
<dbReference type="OrthoDB" id="10261062at2759"/>
<dbReference type="PhylomeDB" id="B4N7R4"/>
<dbReference type="UniPathway" id="UPA00344"/>
<dbReference type="UniPathway" id="UPA00988"/>
<dbReference type="Proteomes" id="UP000007798">
    <property type="component" value="Unassembled WGS sequence"/>
</dbReference>
<dbReference type="GO" id="GO:0005829">
    <property type="term" value="C:cytosol"/>
    <property type="evidence" value="ECO:0000250"/>
    <property type="project" value="UniProtKB"/>
</dbReference>
<dbReference type="GO" id="GO:0005524">
    <property type="term" value="F:ATP binding"/>
    <property type="evidence" value="ECO:0007669"/>
    <property type="project" value="UniProtKB-KW"/>
</dbReference>
<dbReference type="GO" id="GO:0046872">
    <property type="term" value="F:metal ion binding"/>
    <property type="evidence" value="ECO:0007669"/>
    <property type="project" value="UniProtKB-KW"/>
</dbReference>
<dbReference type="GO" id="GO:0061605">
    <property type="term" value="F:molybdopterin-synthase adenylyltransferase activity"/>
    <property type="evidence" value="ECO:0007669"/>
    <property type="project" value="UniProtKB-EC"/>
</dbReference>
<dbReference type="GO" id="GO:0061604">
    <property type="term" value="F:molybdopterin-synthase sulfurtransferase activity"/>
    <property type="evidence" value="ECO:0000250"/>
    <property type="project" value="UniProtKB"/>
</dbReference>
<dbReference type="GO" id="GO:0004792">
    <property type="term" value="F:thiosulfate-cyanide sulfurtransferase activity"/>
    <property type="evidence" value="ECO:0007669"/>
    <property type="project" value="TreeGrafter"/>
</dbReference>
<dbReference type="GO" id="GO:0042292">
    <property type="term" value="F:URM1 activating enzyme activity"/>
    <property type="evidence" value="ECO:0007669"/>
    <property type="project" value="TreeGrafter"/>
</dbReference>
<dbReference type="GO" id="GO:0006777">
    <property type="term" value="P:Mo-molybdopterin cofactor biosynthetic process"/>
    <property type="evidence" value="ECO:0000250"/>
    <property type="project" value="UniProtKB"/>
</dbReference>
<dbReference type="GO" id="GO:0032447">
    <property type="term" value="P:protein urmylation"/>
    <property type="evidence" value="ECO:0007669"/>
    <property type="project" value="TreeGrafter"/>
</dbReference>
<dbReference type="GO" id="GO:0002143">
    <property type="term" value="P:tRNA wobble position uridine thiolation"/>
    <property type="evidence" value="ECO:0007669"/>
    <property type="project" value="InterPro"/>
</dbReference>
<dbReference type="CDD" id="cd00757">
    <property type="entry name" value="ThiF_MoeB_HesA_family"/>
    <property type="match status" value="1"/>
</dbReference>
<dbReference type="FunFam" id="3.40.250.10:FF:000014">
    <property type="entry name" value="Adenylyltransferase and sulfurtransferase MOCS3"/>
    <property type="match status" value="1"/>
</dbReference>
<dbReference type="FunFam" id="3.40.50.720:FF:000206">
    <property type="entry name" value="Adenylyltransferase and sulfurtransferase MOCS3"/>
    <property type="match status" value="1"/>
</dbReference>
<dbReference type="Gene3D" id="3.40.50.720">
    <property type="entry name" value="NAD(P)-binding Rossmann-like Domain"/>
    <property type="match status" value="1"/>
</dbReference>
<dbReference type="Gene3D" id="3.40.250.10">
    <property type="entry name" value="Rhodanese-like domain"/>
    <property type="match status" value="1"/>
</dbReference>
<dbReference type="HAMAP" id="MF_03049">
    <property type="entry name" value="MOCS3_Uba4"/>
    <property type="match status" value="1"/>
</dbReference>
<dbReference type="InterPro" id="IPR028885">
    <property type="entry name" value="MOCS3/Uba4"/>
</dbReference>
<dbReference type="InterPro" id="IPR001763">
    <property type="entry name" value="Rhodanese-like_dom"/>
</dbReference>
<dbReference type="InterPro" id="IPR036873">
    <property type="entry name" value="Rhodanese-like_dom_sf"/>
</dbReference>
<dbReference type="InterPro" id="IPR045886">
    <property type="entry name" value="ThiF/MoeB/HesA"/>
</dbReference>
<dbReference type="InterPro" id="IPR000594">
    <property type="entry name" value="ThiF_NAD_FAD-bd"/>
</dbReference>
<dbReference type="InterPro" id="IPR035985">
    <property type="entry name" value="Ubiquitin-activating_enz"/>
</dbReference>
<dbReference type="NCBIfam" id="NF004281">
    <property type="entry name" value="PRK05690.1"/>
    <property type="match status" value="1"/>
</dbReference>
<dbReference type="PANTHER" id="PTHR10953:SF102">
    <property type="entry name" value="ADENYLYLTRANSFERASE AND SULFURTRANSFERASE MOCS3"/>
    <property type="match status" value="1"/>
</dbReference>
<dbReference type="PANTHER" id="PTHR10953">
    <property type="entry name" value="UBIQUITIN-ACTIVATING ENZYME E1"/>
    <property type="match status" value="1"/>
</dbReference>
<dbReference type="Pfam" id="PF00581">
    <property type="entry name" value="Rhodanese"/>
    <property type="match status" value="1"/>
</dbReference>
<dbReference type="Pfam" id="PF00899">
    <property type="entry name" value="ThiF"/>
    <property type="match status" value="1"/>
</dbReference>
<dbReference type="SMART" id="SM00450">
    <property type="entry name" value="RHOD"/>
    <property type="match status" value="1"/>
</dbReference>
<dbReference type="SUPFAM" id="SSF69572">
    <property type="entry name" value="Activating enzymes of the ubiquitin-like proteins"/>
    <property type="match status" value="1"/>
</dbReference>
<dbReference type="PROSITE" id="PS50206">
    <property type="entry name" value="RHODANESE_3"/>
    <property type="match status" value="1"/>
</dbReference>